<proteinExistence type="inferred from homology"/>
<dbReference type="EC" id="3.5.3.6" evidence="1"/>
<dbReference type="EMBL" id="AL766856">
    <property type="protein sequence ID" value="CAD47781.1"/>
    <property type="molecule type" value="Genomic_DNA"/>
</dbReference>
<dbReference type="RefSeq" id="WP_000194841.1">
    <property type="nucleotide sequence ID" value="NC_004368.1"/>
</dbReference>
<dbReference type="SMR" id="Q8E2K0"/>
<dbReference type="KEGG" id="san:gbs2122"/>
<dbReference type="eggNOG" id="COG2235">
    <property type="taxonomic scope" value="Bacteria"/>
</dbReference>
<dbReference type="HOGENOM" id="CLU_052662_0_1_9"/>
<dbReference type="UniPathway" id="UPA00254">
    <property type="reaction ID" value="UER00364"/>
</dbReference>
<dbReference type="Proteomes" id="UP000000823">
    <property type="component" value="Chromosome"/>
</dbReference>
<dbReference type="GO" id="GO:0005737">
    <property type="term" value="C:cytoplasm"/>
    <property type="evidence" value="ECO:0007669"/>
    <property type="project" value="UniProtKB-SubCell"/>
</dbReference>
<dbReference type="GO" id="GO:0016990">
    <property type="term" value="F:arginine deiminase activity"/>
    <property type="evidence" value="ECO:0007669"/>
    <property type="project" value="UniProtKB-UniRule"/>
</dbReference>
<dbReference type="GO" id="GO:0019547">
    <property type="term" value="P:arginine catabolic process to ornithine"/>
    <property type="evidence" value="ECO:0007669"/>
    <property type="project" value="UniProtKB-UniRule"/>
</dbReference>
<dbReference type="GO" id="GO:0019546">
    <property type="term" value="P:arginine deiminase pathway"/>
    <property type="evidence" value="ECO:0007669"/>
    <property type="project" value="TreeGrafter"/>
</dbReference>
<dbReference type="Gene3D" id="1.10.3930.10">
    <property type="entry name" value="Arginine deiminase"/>
    <property type="match status" value="1"/>
</dbReference>
<dbReference type="Gene3D" id="3.75.10.10">
    <property type="entry name" value="L-arginine/glycine Amidinotransferase, Chain A"/>
    <property type="match status" value="1"/>
</dbReference>
<dbReference type="HAMAP" id="MF_00242">
    <property type="entry name" value="Arg_deiminase"/>
    <property type="match status" value="1"/>
</dbReference>
<dbReference type="InterPro" id="IPR003876">
    <property type="entry name" value="Arg_deiminase"/>
</dbReference>
<dbReference type="NCBIfam" id="TIGR01078">
    <property type="entry name" value="arcA"/>
    <property type="match status" value="1"/>
</dbReference>
<dbReference type="NCBIfam" id="NF002381">
    <property type="entry name" value="PRK01388.1"/>
    <property type="match status" value="1"/>
</dbReference>
<dbReference type="PANTHER" id="PTHR47271">
    <property type="entry name" value="ARGININE DEIMINASE"/>
    <property type="match status" value="1"/>
</dbReference>
<dbReference type="PANTHER" id="PTHR47271:SF2">
    <property type="entry name" value="ARGININE DEIMINASE"/>
    <property type="match status" value="1"/>
</dbReference>
<dbReference type="Pfam" id="PF02274">
    <property type="entry name" value="ADI"/>
    <property type="match status" value="1"/>
</dbReference>
<dbReference type="PIRSF" id="PIRSF006356">
    <property type="entry name" value="Arg_deiminase"/>
    <property type="match status" value="1"/>
</dbReference>
<dbReference type="PRINTS" id="PR01466">
    <property type="entry name" value="ARGDEIMINASE"/>
</dbReference>
<dbReference type="SUPFAM" id="SSF55909">
    <property type="entry name" value="Pentein"/>
    <property type="match status" value="1"/>
</dbReference>
<sequence>MTQTHPIHVFSEIGKLKKVMLHRPGKEIENLMPDYLERLLFDDIPFLEDAQKEHDAFAQALRNEGVEVLYLENLAAESLTNQEIREQFIDEYIGEANVRGRATKKAIRELLLNIKDNKELIEKTMAGIQKSELPEIPSSEKGLTDLVESNYPFAIDPMPNLYFTRDPFATIGNGVSLNHMFSETRNRETLYGKYIFTHHPEYGGKVPMVYEREETTRIEGGDELVLSKDVLAVGISQRTDAASIEKLLVNIFKQNLGFKKVLAFEFANNRKFMHLDTVFTMVDYDKFTIHPEIEGDLRVYSVTYENQDLHIEEEKGDLADLLAKNLGVEKVELIRCGGDNLVAAGREQWNDGSNTLTIAPGVVIVYNRNTITNAILESKGLKLIKINGSELVRGRGGPRCMSMPFEREDL</sequence>
<comment type="catalytic activity">
    <reaction evidence="1">
        <text>L-arginine + H2O = L-citrulline + NH4(+)</text>
        <dbReference type="Rhea" id="RHEA:19597"/>
        <dbReference type="ChEBI" id="CHEBI:15377"/>
        <dbReference type="ChEBI" id="CHEBI:28938"/>
        <dbReference type="ChEBI" id="CHEBI:32682"/>
        <dbReference type="ChEBI" id="CHEBI:57743"/>
        <dbReference type="EC" id="3.5.3.6"/>
    </reaction>
</comment>
<comment type="pathway">
    <text evidence="1">Amino-acid degradation; L-arginine degradation via ADI pathway; carbamoyl phosphate from L-arginine: step 1/2.</text>
</comment>
<comment type="subcellular location">
    <subcellularLocation>
        <location evidence="1">Cytoplasm</location>
    </subcellularLocation>
</comment>
<comment type="similarity">
    <text evidence="1">Belongs to the arginine deiminase family.</text>
</comment>
<name>ARCA_STRA3</name>
<organism>
    <name type="scientific">Streptococcus agalactiae serotype III (strain NEM316)</name>
    <dbReference type="NCBI Taxonomy" id="211110"/>
    <lineage>
        <taxon>Bacteria</taxon>
        <taxon>Bacillati</taxon>
        <taxon>Bacillota</taxon>
        <taxon>Bacilli</taxon>
        <taxon>Lactobacillales</taxon>
        <taxon>Streptococcaceae</taxon>
        <taxon>Streptococcus</taxon>
    </lineage>
</organism>
<reference key="1">
    <citation type="journal article" date="2002" name="Mol. Microbiol.">
        <title>Genome sequence of Streptococcus agalactiae, a pathogen causing invasive neonatal disease.</title>
        <authorList>
            <person name="Glaser P."/>
            <person name="Rusniok C."/>
            <person name="Buchrieser C."/>
            <person name="Chevalier F."/>
            <person name="Frangeul L."/>
            <person name="Msadek T."/>
            <person name="Zouine M."/>
            <person name="Couve E."/>
            <person name="Lalioui L."/>
            <person name="Poyart C."/>
            <person name="Trieu-Cuot P."/>
            <person name="Kunst F."/>
        </authorList>
    </citation>
    <scope>NUCLEOTIDE SEQUENCE [LARGE SCALE GENOMIC DNA]</scope>
    <source>
        <strain>NEM316</strain>
    </source>
</reference>
<protein>
    <recommendedName>
        <fullName evidence="1">Arginine deiminase</fullName>
        <shortName evidence="1">ADI</shortName>
        <ecNumber evidence="1">3.5.3.6</ecNumber>
    </recommendedName>
    <alternativeName>
        <fullName evidence="1">Arginine dihydrolase</fullName>
        <shortName evidence="1">AD</shortName>
    </alternativeName>
</protein>
<evidence type="ECO:0000255" key="1">
    <source>
        <dbReference type="HAMAP-Rule" id="MF_00242"/>
    </source>
</evidence>
<gene>
    <name evidence="1" type="primary">arcA</name>
    <name type="ordered locus">gbs2122</name>
</gene>
<keyword id="KW-0056">Arginine metabolism</keyword>
<keyword id="KW-0963">Cytoplasm</keyword>
<keyword id="KW-0378">Hydrolase</keyword>
<accession>Q8E2K0</accession>
<feature type="chain" id="PRO_0000182243" description="Arginine deiminase">
    <location>
        <begin position="1"/>
        <end position="410"/>
    </location>
</feature>
<feature type="active site" description="Amidino-cysteine intermediate" evidence="1">
    <location>
        <position position="400"/>
    </location>
</feature>